<gene>
    <name type="ordered locus">ABAYE3512</name>
</gene>
<feature type="chain" id="PRO_1000131820" description="Probable Fe(2+)-trafficking protein">
    <location>
        <begin position="1"/>
        <end position="89"/>
    </location>
</feature>
<organism>
    <name type="scientific">Acinetobacter baumannii (strain AYE)</name>
    <dbReference type="NCBI Taxonomy" id="509173"/>
    <lineage>
        <taxon>Bacteria</taxon>
        <taxon>Pseudomonadati</taxon>
        <taxon>Pseudomonadota</taxon>
        <taxon>Gammaproteobacteria</taxon>
        <taxon>Moraxellales</taxon>
        <taxon>Moraxellaceae</taxon>
        <taxon>Acinetobacter</taxon>
        <taxon>Acinetobacter calcoaceticus/baumannii complex</taxon>
    </lineage>
</organism>
<sequence>MSRQVFCRKYQKEMEGLDFAPFPGAKGQEFFENVSKQAWQEWLQHQTTLINEKRLNVFEPEAKKFLEEQREKFFNNDESVEKAEGWKPE</sequence>
<name>FETP_ACIBY</name>
<reference key="1">
    <citation type="journal article" date="2008" name="PLoS ONE">
        <title>Comparative analysis of Acinetobacters: three genomes for three lifestyles.</title>
        <authorList>
            <person name="Vallenet D."/>
            <person name="Nordmann P."/>
            <person name="Barbe V."/>
            <person name="Poirel L."/>
            <person name="Mangenot S."/>
            <person name="Bataille E."/>
            <person name="Dossat C."/>
            <person name="Gas S."/>
            <person name="Kreimeyer A."/>
            <person name="Lenoble P."/>
            <person name="Oztas S."/>
            <person name="Poulain J."/>
            <person name="Segurens B."/>
            <person name="Robert C."/>
            <person name="Abergel C."/>
            <person name="Claverie J.-M."/>
            <person name="Raoult D."/>
            <person name="Medigue C."/>
            <person name="Weissenbach J."/>
            <person name="Cruveiller S."/>
        </authorList>
    </citation>
    <scope>NUCLEOTIDE SEQUENCE [LARGE SCALE GENOMIC DNA]</scope>
    <source>
        <strain>AYE</strain>
    </source>
</reference>
<keyword id="KW-0408">Iron</keyword>
<proteinExistence type="inferred from homology"/>
<protein>
    <recommendedName>
        <fullName evidence="1">Probable Fe(2+)-trafficking protein</fullName>
    </recommendedName>
</protein>
<evidence type="ECO:0000255" key="1">
    <source>
        <dbReference type="HAMAP-Rule" id="MF_00686"/>
    </source>
</evidence>
<accession>B0VDE5</accession>
<dbReference type="EMBL" id="CU459141">
    <property type="protein sequence ID" value="CAM88300.1"/>
    <property type="molecule type" value="Genomic_DNA"/>
</dbReference>
<dbReference type="RefSeq" id="WP_000089996.1">
    <property type="nucleotide sequence ID" value="NZ_JBDGFB010000019.1"/>
</dbReference>
<dbReference type="SMR" id="B0VDE5"/>
<dbReference type="EnsemblBacteria" id="CAM88300">
    <property type="protein sequence ID" value="CAM88300"/>
    <property type="gene ID" value="ABAYE3512"/>
</dbReference>
<dbReference type="KEGG" id="aby:ABAYE3512"/>
<dbReference type="HOGENOM" id="CLU_170994_0_0_6"/>
<dbReference type="GO" id="GO:0005829">
    <property type="term" value="C:cytosol"/>
    <property type="evidence" value="ECO:0007669"/>
    <property type="project" value="TreeGrafter"/>
</dbReference>
<dbReference type="GO" id="GO:0005506">
    <property type="term" value="F:iron ion binding"/>
    <property type="evidence" value="ECO:0007669"/>
    <property type="project" value="UniProtKB-UniRule"/>
</dbReference>
<dbReference type="GO" id="GO:0034599">
    <property type="term" value="P:cellular response to oxidative stress"/>
    <property type="evidence" value="ECO:0007669"/>
    <property type="project" value="TreeGrafter"/>
</dbReference>
<dbReference type="Gene3D" id="1.10.3880.10">
    <property type="entry name" value="Fe(II) trafficking protein YggX"/>
    <property type="match status" value="1"/>
</dbReference>
<dbReference type="HAMAP" id="MF_00686">
    <property type="entry name" value="Fe_traffic_YggX"/>
    <property type="match status" value="1"/>
</dbReference>
<dbReference type="InterPro" id="IPR007457">
    <property type="entry name" value="Fe_traffick_prot_YggX"/>
</dbReference>
<dbReference type="InterPro" id="IPR036766">
    <property type="entry name" value="Fe_traffick_prot_YggX_sf"/>
</dbReference>
<dbReference type="NCBIfam" id="NF003817">
    <property type="entry name" value="PRK05408.1"/>
    <property type="match status" value="1"/>
</dbReference>
<dbReference type="PANTHER" id="PTHR36965">
    <property type="entry name" value="FE(2+)-TRAFFICKING PROTEIN-RELATED"/>
    <property type="match status" value="1"/>
</dbReference>
<dbReference type="PANTHER" id="PTHR36965:SF1">
    <property type="entry name" value="FE(2+)-TRAFFICKING PROTEIN-RELATED"/>
    <property type="match status" value="1"/>
</dbReference>
<dbReference type="Pfam" id="PF04362">
    <property type="entry name" value="Iron_traffic"/>
    <property type="match status" value="1"/>
</dbReference>
<dbReference type="PIRSF" id="PIRSF029827">
    <property type="entry name" value="Fe_traffic_YggX"/>
    <property type="match status" value="1"/>
</dbReference>
<dbReference type="SUPFAM" id="SSF111148">
    <property type="entry name" value="YggX-like"/>
    <property type="match status" value="1"/>
</dbReference>
<comment type="function">
    <text evidence="1">Could be a mediator in iron transactions between iron acquisition and iron-requiring processes, such as synthesis and/or repair of Fe-S clusters in biosynthetic enzymes.</text>
</comment>
<comment type="similarity">
    <text evidence="1">Belongs to the Fe(2+)-trafficking protein family.</text>
</comment>